<accession>P27610</accession>
<comment type="function">
    <text>This protein might be involved in the compartmentalization of the silk gland.</text>
</comment>
<comment type="subcellular location">
    <subcellularLocation>
        <location evidence="1">Nucleus</location>
    </subcellularLocation>
</comment>
<comment type="tissue specificity">
    <text>Expressed in the middle silk gland but not in the posterior silk gland during the fourth molt/fifth intermolt period.</text>
</comment>
<comment type="similarity">
    <text evidence="3">Belongs to the engrailed homeobox family.</text>
</comment>
<keyword id="KW-0217">Developmental protein</keyword>
<keyword id="KW-0238">DNA-binding</keyword>
<keyword id="KW-0371">Homeobox</keyword>
<keyword id="KW-0539">Nucleus</keyword>
<keyword id="KW-1185">Reference proteome</keyword>
<gene>
    <name type="primary">INV</name>
</gene>
<evidence type="ECO:0000255" key="1">
    <source>
        <dbReference type="PROSITE-ProRule" id="PRU00108"/>
    </source>
</evidence>
<evidence type="ECO:0000256" key="2">
    <source>
        <dbReference type="SAM" id="MobiDB-lite"/>
    </source>
</evidence>
<evidence type="ECO:0000305" key="3"/>
<dbReference type="EMBL" id="M64336">
    <property type="protein sequence ID" value="AAA67313.1"/>
    <property type="molecule type" value="mRNA"/>
</dbReference>
<dbReference type="PIR" id="B41792">
    <property type="entry name" value="B41792"/>
</dbReference>
<dbReference type="RefSeq" id="NP_001037454.1">
    <property type="nucleotide sequence ID" value="NM_001043989.1"/>
</dbReference>
<dbReference type="SMR" id="P27610"/>
<dbReference type="STRING" id="7091.P27610"/>
<dbReference type="PaxDb" id="7091-BGIBMGA009643-TA"/>
<dbReference type="EnsemblMetazoa" id="NM_001043989.1">
    <property type="protein sequence ID" value="NP_001037454.1"/>
    <property type="gene ID" value="GeneID_693024"/>
</dbReference>
<dbReference type="GeneID" id="693024"/>
<dbReference type="KEGG" id="bmor:693024"/>
<dbReference type="CTD" id="36239"/>
<dbReference type="eggNOG" id="KOG0493">
    <property type="taxonomic scope" value="Eukaryota"/>
</dbReference>
<dbReference type="HOGENOM" id="CLU_040714_0_0_1"/>
<dbReference type="InParanoid" id="P27610"/>
<dbReference type="OrthoDB" id="559326at7088"/>
<dbReference type="Proteomes" id="UP000005204">
    <property type="component" value="Unassembled WGS sequence"/>
</dbReference>
<dbReference type="GO" id="GO:0005634">
    <property type="term" value="C:nucleus"/>
    <property type="evidence" value="ECO:0007669"/>
    <property type="project" value="UniProtKB-SubCell"/>
</dbReference>
<dbReference type="GO" id="GO:0000981">
    <property type="term" value="F:DNA-binding transcription factor activity, RNA polymerase II-specific"/>
    <property type="evidence" value="ECO:0007669"/>
    <property type="project" value="InterPro"/>
</dbReference>
<dbReference type="GO" id="GO:0000978">
    <property type="term" value="F:RNA polymerase II cis-regulatory region sequence-specific DNA binding"/>
    <property type="evidence" value="ECO:0007669"/>
    <property type="project" value="TreeGrafter"/>
</dbReference>
<dbReference type="GO" id="GO:0030182">
    <property type="term" value="P:neuron differentiation"/>
    <property type="evidence" value="ECO:0007669"/>
    <property type="project" value="TreeGrafter"/>
</dbReference>
<dbReference type="CDD" id="cd00086">
    <property type="entry name" value="homeodomain"/>
    <property type="match status" value="1"/>
</dbReference>
<dbReference type="FunFam" id="1.10.10.60:FF:000189">
    <property type="entry name" value="Homeobox protein engrailed-like"/>
    <property type="match status" value="1"/>
</dbReference>
<dbReference type="Gene3D" id="1.10.10.60">
    <property type="entry name" value="Homeodomain-like"/>
    <property type="match status" value="1"/>
</dbReference>
<dbReference type="InterPro" id="IPR050720">
    <property type="entry name" value="Engrailed_Homeobox_TFs"/>
</dbReference>
<dbReference type="InterPro" id="IPR001356">
    <property type="entry name" value="HD"/>
</dbReference>
<dbReference type="InterPro" id="IPR000747">
    <property type="entry name" value="HD_engrailed"/>
</dbReference>
<dbReference type="InterPro" id="IPR020479">
    <property type="entry name" value="HD_metazoa"/>
</dbReference>
<dbReference type="InterPro" id="IPR019549">
    <property type="entry name" value="Homeobox-engrailed_C-terminal"/>
</dbReference>
<dbReference type="InterPro" id="IPR019737">
    <property type="entry name" value="Homeobox-engrailed_CS"/>
</dbReference>
<dbReference type="InterPro" id="IPR017970">
    <property type="entry name" value="Homeobox_CS"/>
</dbReference>
<dbReference type="InterPro" id="IPR009057">
    <property type="entry name" value="Homeodomain-like_sf"/>
</dbReference>
<dbReference type="InterPro" id="IPR000047">
    <property type="entry name" value="HTH_motif"/>
</dbReference>
<dbReference type="PANTHER" id="PTHR24341">
    <property type="entry name" value="HOMEOBOX PROTEIN ENGRAILED"/>
    <property type="match status" value="1"/>
</dbReference>
<dbReference type="PANTHER" id="PTHR24341:SF6">
    <property type="entry name" value="HOMEOBOX PROTEIN INVECTED"/>
    <property type="match status" value="1"/>
</dbReference>
<dbReference type="Pfam" id="PF10525">
    <property type="entry name" value="Engrail_1_C_sig"/>
    <property type="match status" value="1"/>
</dbReference>
<dbReference type="Pfam" id="PF00046">
    <property type="entry name" value="Homeodomain"/>
    <property type="match status" value="1"/>
</dbReference>
<dbReference type="PRINTS" id="PR00026">
    <property type="entry name" value="ENGRAILED"/>
</dbReference>
<dbReference type="PRINTS" id="PR00024">
    <property type="entry name" value="HOMEOBOX"/>
</dbReference>
<dbReference type="PRINTS" id="PR00031">
    <property type="entry name" value="HTHREPRESSR"/>
</dbReference>
<dbReference type="SMART" id="SM00389">
    <property type="entry name" value="HOX"/>
    <property type="match status" value="1"/>
</dbReference>
<dbReference type="SUPFAM" id="SSF46689">
    <property type="entry name" value="Homeodomain-like"/>
    <property type="match status" value="1"/>
</dbReference>
<dbReference type="PROSITE" id="PS00033">
    <property type="entry name" value="ENGRAILED"/>
    <property type="match status" value="1"/>
</dbReference>
<dbReference type="PROSITE" id="PS00027">
    <property type="entry name" value="HOMEOBOX_1"/>
    <property type="match status" value="1"/>
</dbReference>
<dbReference type="PROSITE" id="PS50071">
    <property type="entry name" value="HOMEOBOX_2"/>
    <property type="match status" value="1"/>
</dbReference>
<proteinExistence type="evidence at transcript level"/>
<reference key="1">
    <citation type="journal article" date="1992" name="Proc. Natl. Acad. Sci. U.S.A.">
        <title>Molecular characterization and silk gland expression of Bombyx engrailed and invected genes.</title>
        <authorList>
            <person name="Hui C.-C."/>
            <person name="Matsuno K."/>
            <person name="Ueno K."/>
            <person name="Suzuki Y."/>
        </authorList>
    </citation>
    <scope>NUCLEOTIDE SEQUENCE [MRNA]</scope>
    <source>
        <strain>Kinshu X Showa</strain>
        <tissue>Middle silk gland</tissue>
    </source>
</reference>
<name>HMIN_BOMMO</name>
<feature type="chain" id="PRO_0000196080" description="Homeobox protein invected">
    <location>
        <begin position="1"/>
        <end position="476"/>
    </location>
</feature>
<feature type="DNA-binding region" description="Homeobox" evidence="1">
    <location>
        <begin position="372"/>
        <end position="431"/>
    </location>
</feature>
<feature type="region of interest" description="Disordered" evidence="2">
    <location>
        <begin position="1"/>
        <end position="43"/>
    </location>
</feature>
<feature type="region of interest" description="Disordered" evidence="2">
    <location>
        <begin position="273"/>
        <end position="331"/>
    </location>
</feature>
<feature type="region of interest" description="Disordered" evidence="2">
    <location>
        <begin position="347"/>
        <end position="381"/>
    </location>
</feature>
<feature type="compositionally biased region" description="Polar residues" evidence="2">
    <location>
        <begin position="23"/>
        <end position="32"/>
    </location>
</feature>
<feature type="compositionally biased region" description="Basic and acidic residues" evidence="2">
    <location>
        <begin position="33"/>
        <end position="43"/>
    </location>
</feature>
<feature type="compositionally biased region" description="Basic and acidic residues" evidence="2">
    <location>
        <begin position="292"/>
        <end position="305"/>
    </location>
</feature>
<feature type="compositionally biased region" description="Low complexity" evidence="2">
    <location>
        <begin position="318"/>
        <end position="331"/>
    </location>
</feature>
<sequence>MAAVSAHMQDIKIQDQSDDDPYSPNTRDTTSPECHDDEKSEDISIRSSSFSIHNVLRRSGTTAALTMSFRRKSSWRIPNFDDRNTESVSPVVEVNEREISVDDGNSCCSDDTVLSVGNEAPVSNYEEKASQNTHQELTSFKHIQTHLSAISQLSQNMNVAQPLLLRPSPINPNPIMFLNQPLLFQSPILSQDLKGMPNRQTANVISPTFGLNFGMRLKANHETRTRSDENRYSKPEESRDYINQNCLKFSIDNILKADFGRRITDPLHKRKVKTRYEAKPAPAKDTAAFAPKLDEARVPDIKTPDKAGAIDLSKDDSGSNSGSTSGATSGDSPMVWPAWVYCTRYSDRPSSGRSPRTRRPKKPPGDTASNDEKRPRTAFSGPQLARLKHEFAENRYLTERRRQSLAAELGLAEAQIKIWFQNKRAKIKKASGQRNPLALQLMAQGLYNHSTVPLTKEEEELEMKARERERELKNRC</sequence>
<protein>
    <recommendedName>
        <fullName>Homeobox protein invected</fullName>
    </recommendedName>
</protein>
<organism>
    <name type="scientific">Bombyx mori</name>
    <name type="common">Silk moth</name>
    <dbReference type="NCBI Taxonomy" id="7091"/>
    <lineage>
        <taxon>Eukaryota</taxon>
        <taxon>Metazoa</taxon>
        <taxon>Ecdysozoa</taxon>
        <taxon>Arthropoda</taxon>
        <taxon>Hexapoda</taxon>
        <taxon>Insecta</taxon>
        <taxon>Pterygota</taxon>
        <taxon>Neoptera</taxon>
        <taxon>Endopterygota</taxon>
        <taxon>Lepidoptera</taxon>
        <taxon>Glossata</taxon>
        <taxon>Ditrysia</taxon>
        <taxon>Bombycoidea</taxon>
        <taxon>Bombycidae</taxon>
        <taxon>Bombycinae</taxon>
        <taxon>Bombyx</taxon>
    </lineage>
</organism>